<reference key="1">
    <citation type="journal article" date="2000" name="DNA Res.">
        <title>Structural analysis of Arabidopsis thaliana chromosome 3. II. Sequence features of the 4,251,695 bp regions covered by 90 P1, TAC and BAC clones.</title>
        <authorList>
            <person name="Kaneko T."/>
            <person name="Katoh T."/>
            <person name="Sato S."/>
            <person name="Nakamura Y."/>
            <person name="Asamizu E."/>
            <person name="Tabata S."/>
        </authorList>
    </citation>
    <scope>NUCLEOTIDE SEQUENCE [LARGE SCALE GENOMIC DNA]</scope>
    <source>
        <strain>cv. Columbia</strain>
    </source>
</reference>
<reference key="2">
    <citation type="journal article" date="2017" name="Plant J.">
        <title>Araport11: a complete reannotation of the Arabidopsis thaliana reference genome.</title>
        <authorList>
            <person name="Cheng C.Y."/>
            <person name="Krishnakumar V."/>
            <person name="Chan A.P."/>
            <person name="Thibaud-Nissen F."/>
            <person name="Schobel S."/>
            <person name="Town C.D."/>
        </authorList>
    </citation>
    <scope>GENOME REANNOTATION</scope>
    <source>
        <strain>cv. Columbia</strain>
    </source>
</reference>
<reference key="3">
    <citation type="book" date="2007" name="Proceedings of the 18th international conference on Arabidopsis research">
        <title>S-acylation: dynamic control of plant development and sigalling by lipid modification of proteins.</title>
        <authorList>
            <person name="Hemsley P.A."/>
            <person name="Taylor L."/>
            <person name="Grierson C.S."/>
        </authorList>
    </citation>
    <scope>GENE FAMILY</scope>
    <scope>FUNCTION</scope>
</reference>
<reference key="4">
    <citation type="journal article" date="2012" name="Plant Physiol.">
        <title>Genomics and localization of the Arabidopsis DHHC-cysteine-rich domain S-acyltransferase protein family.</title>
        <authorList>
            <person name="Batistic O."/>
        </authorList>
    </citation>
    <scope>SUBCELLULAR LOCATION</scope>
    <scope>GENE FAMILY</scope>
    <scope>NOMENCLATURE</scope>
</reference>
<gene>
    <name type="primary">PAT20</name>
    <name type="ordered locus">At3g22180</name>
    <name type="ORF">MKA23.9</name>
</gene>
<protein>
    <recommendedName>
        <fullName>Probable protein S-acyltransferase 20</fullName>
        <ecNumber>2.3.1.225</ecNumber>
    </recommendedName>
    <alternativeName>
        <fullName>Probable palmitoyltransferase At3g22180</fullName>
    </alternativeName>
    <alternativeName>
        <fullName>Zinc finger DHHC domain-containing protein At3g22180</fullName>
    </alternativeName>
</protein>
<feature type="chain" id="PRO_0000315405" description="Probable protein S-acyltransferase 20">
    <location>
        <begin position="1"/>
        <end position="706"/>
    </location>
</feature>
<feature type="transmembrane region" description="Helical" evidence="2">
    <location>
        <begin position="16"/>
        <end position="36"/>
    </location>
</feature>
<feature type="transmembrane region" description="Helical" evidence="2">
    <location>
        <begin position="41"/>
        <end position="61"/>
    </location>
</feature>
<feature type="transmembrane region" description="Helical" evidence="2">
    <location>
        <begin position="220"/>
        <end position="240"/>
    </location>
</feature>
<feature type="transmembrane region" description="Helical" evidence="2">
    <location>
        <begin position="275"/>
        <end position="295"/>
    </location>
</feature>
<feature type="domain" description="DHHC" evidence="3">
    <location>
        <begin position="172"/>
        <end position="222"/>
    </location>
</feature>
<feature type="region of interest" description="Disordered" evidence="4">
    <location>
        <begin position="470"/>
        <end position="505"/>
    </location>
</feature>
<feature type="region of interest" description="Disordered" evidence="4">
    <location>
        <begin position="591"/>
        <end position="621"/>
    </location>
</feature>
<feature type="region of interest" description="Disordered" evidence="4">
    <location>
        <begin position="680"/>
        <end position="706"/>
    </location>
</feature>
<feature type="compositionally biased region" description="Polar residues" evidence="4">
    <location>
        <begin position="492"/>
        <end position="501"/>
    </location>
</feature>
<feature type="compositionally biased region" description="Polar residues" evidence="4">
    <location>
        <begin position="591"/>
        <end position="603"/>
    </location>
</feature>
<feature type="compositionally biased region" description="Polar residues" evidence="4">
    <location>
        <begin position="697"/>
        <end position="706"/>
    </location>
</feature>
<feature type="active site" description="S-palmitoyl cysteine intermediate" evidence="1">
    <location>
        <position position="202"/>
    </location>
</feature>
<name>ZDHC8_ARATH</name>
<dbReference type="EC" id="2.3.1.225"/>
<dbReference type="EMBL" id="AP001306">
    <property type="protein sequence ID" value="BAB03066.1"/>
    <property type="status" value="ALT_SEQ"/>
    <property type="molecule type" value="Genomic_DNA"/>
</dbReference>
<dbReference type="EMBL" id="CP002686">
    <property type="protein sequence ID" value="AEE76598.1"/>
    <property type="molecule type" value="Genomic_DNA"/>
</dbReference>
<dbReference type="RefSeq" id="NP_188857.1">
    <property type="nucleotide sequence ID" value="NM_113115.4"/>
</dbReference>
<dbReference type="FunCoup" id="Q9LIE4">
    <property type="interactions" value="129"/>
</dbReference>
<dbReference type="STRING" id="3702.Q9LIE4"/>
<dbReference type="iPTMnet" id="Q9LIE4"/>
<dbReference type="PaxDb" id="3702-AT3G22180.1"/>
<dbReference type="ProteomicsDB" id="232310"/>
<dbReference type="EnsemblPlants" id="AT3G22180.1">
    <property type="protein sequence ID" value="AT3G22180.1"/>
    <property type="gene ID" value="AT3G22180"/>
</dbReference>
<dbReference type="GeneID" id="821782"/>
<dbReference type="Gramene" id="AT3G22180.1">
    <property type="protein sequence ID" value="AT3G22180.1"/>
    <property type="gene ID" value="AT3G22180"/>
</dbReference>
<dbReference type="KEGG" id="ath:AT3G22180"/>
<dbReference type="Araport" id="AT3G22180"/>
<dbReference type="TAIR" id="AT3G22180"/>
<dbReference type="eggNOG" id="KOG1311">
    <property type="taxonomic scope" value="Eukaryota"/>
</dbReference>
<dbReference type="HOGENOM" id="CLU_020283_2_1_1"/>
<dbReference type="InParanoid" id="Q9LIE4"/>
<dbReference type="OMA" id="IMSIFDT"/>
<dbReference type="PhylomeDB" id="Q9LIE4"/>
<dbReference type="BRENDA" id="2.3.1.225">
    <property type="organism ID" value="399"/>
</dbReference>
<dbReference type="PRO" id="PR:Q9LIE4"/>
<dbReference type="Proteomes" id="UP000006548">
    <property type="component" value="Chromosome 3"/>
</dbReference>
<dbReference type="ExpressionAtlas" id="Q9LIE4">
    <property type="expression patterns" value="baseline and differential"/>
</dbReference>
<dbReference type="GO" id="GO:0030659">
    <property type="term" value="C:cytoplasmic vesicle membrane"/>
    <property type="evidence" value="ECO:0007669"/>
    <property type="project" value="UniProtKB-SubCell"/>
</dbReference>
<dbReference type="GO" id="GO:0005886">
    <property type="term" value="C:plasma membrane"/>
    <property type="evidence" value="ECO:0007669"/>
    <property type="project" value="UniProtKB-SubCell"/>
</dbReference>
<dbReference type="GO" id="GO:0019706">
    <property type="term" value="F:protein-cysteine S-palmitoyltransferase activity"/>
    <property type="evidence" value="ECO:0007669"/>
    <property type="project" value="UniProtKB-EC"/>
</dbReference>
<dbReference type="InterPro" id="IPR001594">
    <property type="entry name" value="Palmitoyltrfase_DHHC"/>
</dbReference>
<dbReference type="InterPro" id="IPR039859">
    <property type="entry name" value="PFA4/ZDH16/20/ERF2-like"/>
</dbReference>
<dbReference type="PANTHER" id="PTHR22883:SF338">
    <property type="entry name" value="PROTEIN S-ACYLTRANSFERASE 20-RELATED"/>
    <property type="match status" value="1"/>
</dbReference>
<dbReference type="PANTHER" id="PTHR22883">
    <property type="entry name" value="ZINC FINGER DHHC DOMAIN CONTAINING PROTEIN"/>
    <property type="match status" value="1"/>
</dbReference>
<dbReference type="Pfam" id="PF01529">
    <property type="entry name" value="DHHC"/>
    <property type="match status" value="1"/>
</dbReference>
<dbReference type="PROSITE" id="PS50216">
    <property type="entry name" value="DHHC"/>
    <property type="match status" value="1"/>
</dbReference>
<proteinExistence type="inferred from homology"/>
<accession>Q9LIE4</accession>
<sequence length="706" mass="76874">MVRKHGWQLPAHTLQVIAITVFCLLVVAFYAFFAPFVGGRIWEYVLIGVYSPVAILVFVLYVRCTAINPADPRIMSIFDTGVNGDGMVRGLSRNYDETGSQLQASPSVVSRSSTVAGNSSVKGSVEDAQRVESVSRRSCYNPLAVFCYVFVVEDCRKKEGPAEEQGNSEEALFCTLCNCEVRKFSKHCRSCDKCVDCFDHHCKWLNNCVGRKNYVTFVSLMSASLLWLIIEAAVGIAVIVRVFVNKQTMETEIVNRLGNSFSRAPLAAVVGLCTAVAIFACFPLGELLFFHMLLIKKGITTYEYVVAMRAMSEAPDGASVDEEIQNVLYSPTGSATTGFSGGSSLGLPYRGVWCTPPRVFDNQDEVIPHLDPCMVPSTVDPDAPGSEKGTKALKRPVKRNAWKLAKLDPNEAARAAARARASSSVLRPIDNRHLPDNDLSSIGTVSIISSVSTDANVAASKEIRNNDLRSSLSRNSFAPSQGSRDEYDTGSHGMSNLSSPSHVHESVTLAPLPQNPTIVGNRFTATSHHMHSTFDDKVLHRGNDADPLFLFAPATSHLRDVRKTSVVWDPEAGRYVSAPVTTTSEVRNRLLNPSSQTASTQNPRPILPAHDSSSGSSALRDPLPLHQAERRLTYTGDSIFYGGPLINIPTRDTPRSGRGLVRDVQDRLASTVHRDARIRRDSTSNQLPVFAPGGLGANSQTGSNIK</sequence>
<evidence type="ECO:0000250" key="1"/>
<evidence type="ECO:0000255" key="2"/>
<evidence type="ECO:0000255" key="3">
    <source>
        <dbReference type="PROSITE-ProRule" id="PRU00067"/>
    </source>
</evidence>
<evidence type="ECO:0000256" key="4">
    <source>
        <dbReference type="SAM" id="MobiDB-lite"/>
    </source>
</evidence>
<evidence type="ECO:0000269" key="5">
    <source ref="3"/>
</evidence>
<evidence type="ECO:0000305" key="6"/>
<organism>
    <name type="scientific">Arabidopsis thaliana</name>
    <name type="common">Mouse-ear cress</name>
    <dbReference type="NCBI Taxonomy" id="3702"/>
    <lineage>
        <taxon>Eukaryota</taxon>
        <taxon>Viridiplantae</taxon>
        <taxon>Streptophyta</taxon>
        <taxon>Embryophyta</taxon>
        <taxon>Tracheophyta</taxon>
        <taxon>Spermatophyta</taxon>
        <taxon>Magnoliopsida</taxon>
        <taxon>eudicotyledons</taxon>
        <taxon>Gunneridae</taxon>
        <taxon>Pentapetalae</taxon>
        <taxon>rosids</taxon>
        <taxon>malvids</taxon>
        <taxon>Brassicales</taxon>
        <taxon>Brassicaceae</taxon>
        <taxon>Camelineae</taxon>
        <taxon>Arabidopsis</taxon>
    </lineage>
</organism>
<comment type="function">
    <text evidence="1 5">Palmitoyl acyltransferase.</text>
</comment>
<comment type="catalytic activity">
    <reaction>
        <text>L-cysteinyl-[protein] + hexadecanoyl-CoA = S-hexadecanoyl-L-cysteinyl-[protein] + CoA</text>
        <dbReference type="Rhea" id="RHEA:36683"/>
        <dbReference type="Rhea" id="RHEA-COMP:10131"/>
        <dbReference type="Rhea" id="RHEA-COMP:11032"/>
        <dbReference type="ChEBI" id="CHEBI:29950"/>
        <dbReference type="ChEBI" id="CHEBI:57287"/>
        <dbReference type="ChEBI" id="CHEBI:57379"/>
        <dbReference type="ChEBI" id="CHEBI:74151"/>
        <dbReference type="EC" id="2.3.1.225"/>
    </reaction>
</comment>
<comment type="subcellular location">
    <subcellularLocation>
        <location evidence="6">Cell membrane</location>
        <topology evidence="6">Multi-pass membrane protein</topology>
    </subcellularLocation>
    <subcellularLocation>
        <location evidence="6">Cytoplasmic vesicle membrane</location>
        <topology evidence="6">Multi-pass membrane protein</topology>
    </subcellularLocation>
</comment>
<comment type="domain">
    <text evidence="1">The DHHC domain is required for palmitoyltransferase activity.</text>
</comment>
<comment type="similarity">
    <text evidence="6">Belongs to the DHHC palmitoyltransferase family.</text>
</comment>
<comment type="sequence caution" evidence="6">
    <conflict type="erroneous gene model prediction">
        <sequence resource="EMBL-CDS" id="BAB03066"/>
    </conflict>
</comment>
<keyword id="KW-0012">Acyltransferase</keyword>
<keyword id="KW-1003">Cell membrane</keyword>
<keyword id="KW-0968">Cytoplasmic vesicle</keyword>
<keyword id="KW-0449">Lipoprotein</keyword>
<keyword id="KW-0472">Membrane</keyword>
<keyword id="KW-0564">Palmitate</keyword>
<keyword id="KW-1185">Reference proteome</keyword>
<keyword id="KW-0808">Transferase</keyword>
<keyword id="KW-0812">Transmembrane</keyword>
<keyword id="KW-1133">Transmembrane helix</keyword>